<reference key="1">
    <citation type="submission" date="2006-03" db="EMBL/GenBank/DDBJ databases">
        <title>Complete sequence of Shewanella denitrificans OS217.</title>
        <authorList>
            <consortium name="US DOE Joint Genome Institute"/>
            <person name="Copeland A."/>
            <person name="Lucas S."/>
            <person name="Lapidus A."/>
            <person name="Barry K."/>
            <person name="Detter J.C."/>
            <person name="Glavina del Rio T."/>
            <person name="Hammon N."/>
            <person name="Israni S."/>
            <person name="Dalin E."/>
            <person name="Tice H."/>
            <person name="Pitluck S."/>
            <person name="Brettin T."/>
            <person name="Bruce D."/>
            <person name="Han C."/>
            <person name="Tapia R."/>
            <person name="Gilna P."/>
            <person name="Kiss H."/>
            <person name="Schmutz J."/>
            <person name="Larimer F."/>
            <person name="Land M."/>
            <person name="Hauser L."/>
            <person name="Kyrpides N."/>
            <person name="Lykidis A."/>
            <person name="Richardson P."/>
        </authorList>
    </citation>
    <scope>NUCLEOTIDE SEQUENCE [LARGE SCALE GENOMIC DNA]</scope>
    <source>
        <strain>OS217 / ATCC BAA-1090 / DSM 15013</strain>
    </source>
</reference>
<dbReference type="EC" id="3.6.1.27" evidence="1"/>
<dbReference type="EMBL" id="CP000302">
    <property type="protein sequence ID" value="ABE56105.1"/>
    <property type="molecule type" value="Genomic_DNA"/>
</dbReference>
<dbReference type="RefSeq" id="WP_011497255.1">
    <property type="nucleotide sequence ID" value="NC_007954.1"/>
</dbReference>
<dbReference type="SMR" id="Q12KC1"/>
<dbReference type="STRING" id="318161.Sden_2826"/>
<dbReference type="KEGG" id="sdn:Sden_2826"/>
<dbReference type="eggNOG" id="COG1968">
    <property type="taxonomic scope" value="Bacteria"/>
</dbReference>
<dbReference type="HOGENOM" id="CLU_060296_1_0_6"/>
<dbReference type="OrthoDB" id="9808289at2"/>
<dbReference type="Proteomes" id="UP000001982">
    <property type="component" value="Chromosome"/>
</dbReference>
<dbReference type="GO" id="GO:0005886">
    <property type="term" value="C:plasma membrane"/>
    <property type="evidence" value="ECO:0007669"/>
    <property type="project" value="UniProtKB-SubCell"/>
</dbReference>
<dbReference type="GO" id="GO:0050380">
    <property type="term" value="F:undecaprenyl-diphosphatase activity"/>
    <property type="evidence" value="ECO:0007669"/>
    <property type="project" value="UniProtKB-UniRule"/>
</dbReference>
<dbReference type="GO" id="GO:0071555">
    <property type="term" value="P:cell wall organization"/>
    <property type="evidence" value="ECO:0007669"/>
    <property type="project" value="UniProtKB-KW"/>
</dbReference>
<dbReference type="GO" id="GO:0009252">
    <property type="term" value="P:peptidoglycan biosynthetic process"/>
    <property type="evidence" value="ECO:0007669"/>
    <property type="project" value="UniProtKB-KW"/>
</dbReference>
<dbReference type="GO" id="GO:0008360">
    <property type="term" value="P:regulation of cell shape"/>
    <property type="evidence" value="ECO:0007669"/>
    <property type="project" value="UniProtKB-KW"/>
</dbReference>
<dbReference type="GO" id="GO:0046677">
    <property type="term" value="P:response to antibiotic"/>
    <property type="evidence" value="ECO:0007669"/>
    <property type="project" value="UniProtKB-UniRule"/>
</dbReference>
<dbReference type="HAMAP" id="MF_01006">
    <property type="entry name" value="Undec_diphosphatase"/>
    <property type="match status" value="1"/>
</dbReference>
<dbReference type="InterPro" id="IPR003824">
    <property type="entry name" value="UppP"/>
</dbReference>
<dbReference type="NCBIfam" id="NF001393">
    <property type="entry name" value="PRK00281.2-4"/>
    <property type="match status" value="1"/>
</dbReference>
<dbReference type="NCBIfam" id="TIGR00753">
    <property type="entry name" value="undec_PP_bacA"/>
    <property type="match status" value="1"/>
</dbReference>
<dbReference type="PANTHER" id="PTHR30622">
    <property type="entry name" value="UNDECAPRENYL-DIPHOSPHATASE"/>
    <property type="match status" value="1"/>
</dbReference>
<dbReference type="PANTHER" id="PTHR30622:SF4">
    <property type="entry name" value="UNDECAPRENYL-DIPHOSPHATASE"/>
    <property type="match status" value="1"/>
</dbReference>
<dbReference type="Pfam" id="PF02673">
    <property type="entry name" value="BacA"/>
    <property type="match status" value="1"/>
</dbReference>
<evidence type="ECO:0000255" key="1">
    <source>
        <dbReference type="HAMAP-Rule" id="MF_01006"/>
    </source>
</evidence>
<protein>
    <recommendedName>
        <fullName evidence="1">Undecaprenyl-diphosphatase</fullName>
        <ecNumber evidence="1">3.6.1.27</ecNumber>
    </recommendedName>
    <alternativeName>
        <fullName evidence="1">Bacitracin resistance protein</fullName>
    </alternativeName>
    <alternativeName>
        <fullName evidence="1">Undecaprenyl pyrophosphate phosphatase</fullName>
    </alternativeName>
</protein>
<sequence length="266" mass="29285">METFQIILLALIQGLTEFLPISSSAHLILPSQLLGWKDQGFSFDVAVNTGSLLAVVIYFRHDLWTMAKAWVLSLVKGEQSNESKLAWWIILATIPAVIFGFAAKDFIATHLRNTTVIASTTIIFGLLLWWADRMSRSELTVYQTGWRKALLIGFAQALAIIPGTSRSGATMTAALMLGLSREAAAKFSFLMSVPVGLGAAILVTKDLVESPEAIDYQALGIGMLVSFLAAYACIYYFLKYISRMGMTPFVIYRLILGSVLFALILW</sequence>
<organism>
    <name type="scientific">Shewanella denitrificans (strain OS217 / ATCC BAA-1090 / DSM 15013)</name>
    <dbReference type="NCBI Taxonomy" id="318161"/>
    <lineage>
        <taxon>Bacteria</taxon>
        <taxon>Pseudomonadati</taxon>
        <taxon>Pseudomonadota</taxon>
        <taxon>Gammaproteobacteria</taxon>
        <taxon>Alteromonadales</taxon>
        <taxon>Shewanellaceae</taxon>
        <taxon>Shewanella</taxon>
    </lineage>
</organism>
<name>UPPP_SHEDO</name>
<gene>
    <name evidence="1" type="primary">uppP</name>
    <name type="ordered locus">Sden_2826</name>
</gene>
<feature type="chain" id="PRO_0000290761" description="Undecaprenyl-diphosphatase">
    <location>
        <begin position="1"/>
        <end position="266"/>
    </location>
</feature>
<feature type="transmembrane region" description="Helical" evidence="1">
    <location>
        <begin position="1"/>
        <end position="21"/>
    </location>
</feature>
<feature type="transmembrane region" description="Helical" evidence="1">
    <location>
        <begin position="39"/>
        <end position="59"/>
    </location>
</feature>
<feature type="transmembrane region" description="Helical" evidence="1">
    <location>
        <begin position="87"/>
        <end position="107"/>
    </location>
</feature>
<feature type="transmembrane region" description="Helical" evidence="1">
    <location>
        <begin position="111"/>
        <end position="131"/>
    </location>
</feature>
<feature type="transmembrane region" description="Helical" evidence="1">
    <location>
        <begin position="149"/>
        <end position="169"/>
    </location>
</feature>
<feature type="transmembrane region" description="Helical" evidence="1">
    <location>
        <begin position="183"/>
        <end position="203"/>
    </location>
</feature>
<feature type="transmembrane region" description="Helical" evidence="1">
    <location>
        <begin position="218"/>
        <end position="238"/>
    </location>
</feature>
<feature type="transmembrane region" description="Helical" evidence="1">
    <location>
        <begin position="246"/>
        <end position="266"/>
    </location>
</feature>
<keyword id="KW-0046">Antibiotic resistance</keyword>
<keyword id="KW-0997">Cell inner membrane</keyword>
<keyword id="KW-1003">Cell membrane</keyword>
<keyword id="KW-0133">Cell shape</keyword>
<keyword id="KW-0961">Cell wall biogenesis/degradation</keyword>
<keyword id="KW-0378">Hydrolase</keyword>
<keyword id="KW-0472">Membrane</keyword>
<keyword id="KW-0573">Peptidoglycan synthesis</keyword>
<keyword id="KW-1185">Reference proteome</keyword>
<keyword id="KW-0812">Transmembrane</keyword>
<keyword id="KW-1133">Transmembrane helix</keyword>
<accession>Q12KC1</accession>
<comment type="function">
    <text evidence="1">Catalyzes the dephosphorylation of undecaprenyl diphosphate (UPP). Confers resistance to bacitracin.</text>
</comment>
<comment type="catalytic activity">
    <reaction evidence="1">
        <text>di-trans,octa-cis-undecaprenyl diphosphate + H2O = di-trans,octa-cis-undecaprenyl phosphate + phosphate + H(+)</text>
        <dbReference type="Rhea" id="RHEA:28094"/>
        <dbReference type="ChEBI" id="CHEBI:15377"/>
        <dbReference type="ChEBI" id="CHEBI:15378"/>
        <dbReference type="ChEBI" id="CHEBI:43474"/>
        <dbReference type="ChEBI" id="CHEBI:58405"/>
        <dbReference type="ChEBI" id="CHEBI:60392"/>
        <dbReference type="EC" id="3.6.1.27"/>
    </reaction>
</comment>
<comment type="subcellular location">
    <subcellularLocation>
        <location evidence="1">Cell inner membrane</location>
        <topology evidence="1">Multi-pass membrane protein</topology>
    </subcellularLocation>
</comment>
<comment type="miscellaneous">
    <text>Bacitracin is thought to be involved in the inhibition of peptidoglycan synthesis by sequestering undecaprenyl diphosphate, thereby reducing the pool of lipid carrier available.</text>
</comment>
<comment type="similarity">
    <text evidence="1">Belongs to the UppP family.</text>
</comment>
<proteinExistence type="inferred from homology"/>